<evidence type="ECO:0000250" key="1"/>
<evidence type="ECO:0000255" key="2"/>
<evidence type="ECO:0000255" key="3">
    <source>
        <dbReference type="PROSITE-ProRule" id="PRU01014"/>
    </source>
</evidence>
<evidence type="ECO:0000255" key="4">
    <source>
        <dbReference type="PROSITE-ProRule" id="PRU01097"/>
    </source>
</evidence>
<evidence type="ECO:0000255" key="5">
    <source>
        <dbReference type="PROSITE-ProRule" id="PRU01099"/>
    </source>
</evidence>
<evidence type="ECO:0000255" key="6">
    <source>
        <dbReference type="PROSITE-ProRule" id="PRU10062"/>
    </source>
</evidence>
<evidence type="ECO:0000256" key="7">
    <source>
        <dbReference type="SAM" id="MobiDB-lite"/>
    </source>
</evidence>
<evidence type="ECO:0000269" key="8">
    <source>
    </source>
</evidence>
<evidence type="ECO:0000269" key="9">
    <source>
    </source>
</evidence>
<evidence type="ECO:0000305" key="10"/>
<gene>
    <name type="primary">xyn11A</name>
    <name type="synonym">xynE</name>
</gene>
<sequence length="661" mass="69193">MKLPTLGKCVVRTLMGAVALGAISVNAQTLSSNSTGTNNGFYYTFWKDSGDASMTLLSGGRYQSSWGNSTNNWVGGKGWNPGNNSRVISYSGSYGVDSSQNSYLALYGWTRSPLIEYYVIESYGSYNPASCSGGTDYGSFQSDGATYNVRRCQRVNQPSIDGTQTFYQYFSVRNPKKGFGNISGTITFANHVNFWASKGLNLGNHNYQVLATEGYQSRGSSDITVSEGTSGGGTSSVGGASSSVNSSTGGGSSGGITVRARGANGSEHINLRVGGAVVANWTLGTSFQNYLYSGNASGDIQVQFDNDASGRDVVVDYIIVNGETRQAEDMEHNSAVYANGRCGGGSYSENMHCNGEIGFGYTYDCFSGNCSGGNGGSNSSAGNSSSGNTGGGGSNCSGYVGITFDDGPNSNTATLVNLLRQNNLTPVTWFNQGNNVASNAHLMSQQLSVGEVHNHSYTHPHMTSWTYQQVYDELNRTNQAIQNAGAPKPTLFRPPYGELNSTIQQAAQALGLRVVTWDVDSQDWNGASAAAIANAANQLQNGQVILMHDGSYTNTNSAIAQIATNLRAKGLCPGRIDPNTGRAVAPSSSGGSSSVALSSSSRSSSSAGGNTGGNCQCNWWGTFYPLCQTQTSGWGWENSRSCISTSTCNSQGTGGGGVVCN</sequence>
<keyword id="KW-0119">Carbohydrate metabolism</keyword>
<keyword id="KW-0326">Glycosidase</keyword>
<keyword id="KW-0378">Hydrolase</keyword>
<keyword id="KW-0511">Multifunctional enzyme</keyword>
<keyword id="KW-0624">Polysaccharide degradation</keyword>
<keyword id="KW-0964">Secreted</keyword>
<keyword id="KW-0732">Signal</keyword>
<keyword id="KW-0858">Xylan degradation</keyword>
<feature type="signal peptide" evidence="2">
    <location>
        <begin position="1"/>
        <end position="27"/>
    </location>
</feature>
<feature type="chain" id="PRO_5000147608" description="Bifunctional xylanase/xylan deacetylase">
    <location>
        <begin position="28"/>
        <end position="661"/>
    </location>
</feature>
<feature type="domain" description="GH11" evidence="4">
    <location>
        <begin position="29"/>
        <end position="226"/>
    </location>
</feature>
<feature type="domain" description="NodB homology" evidence="3">
    <location>
        <begin position="398"/>
        <end position="574"/>
    </location>
</feature>
<feature type="domain" description="CBM10" evidence="5">
    <location>
        <begin position="616"/>
        <end position="645"/>
    </location>
</feature>
<feature type="region of interest" description="Disordered" evidence="7">
    <location>
        <begin position="220"/>
        <end position="259"/>
    </location>
</feature>
<feature type="region of interest" description="Polysaccharide deacetylase">
    <location>
        <begin position="394"/>
        <end position="577"/>
    </location>
</feature>
<feature type="region of interest" description="Disordered" evidence="7">
    <location>
        <begin position="578"/>
        <end position="610"/>
    </location>
</feature>
<feature type="compositionally biased region" description="Low complexity" evidence="7">
    <location>
        <begin position="237"/>
        <end position="247"/>
    </location>
</feature>
<feature type="compositionally biased region" description="Low complexity" evidence="7">
    <location>
        <begin position="581"/>
        <end position="608"/>
    </location>
</feature>
<feature type="active site" description="Nucleophile; for endoxylanase activity" evidence="6">
    <location>
        <position position="116"/>
    </location>
</feature>
<feature type="active site" description="Proton donor; for endoxylanase activity" evidence="1">
    <location>
        <position position="213"/>
    </location>
</feature>
<comment type="function">
    <text evidence="8 9">Endo-acting xylanase which specifically cleaves internal linkages on the xylan backbone, releasing xylooligosaccharides. Is able to hydrolyze oat spelt xylan and the arabinoxylans from wheat and rye, releasing xylobiose as the major product. Also likely catalyzes, via its C-terminal domain, the removal of acetyl groups from acetylated xylan. Thus, has the capability of hydrolyzing acetylated xylan. Does not attack mannan, galactan, arabinan or any cellulosic substrates.</text>
</comment>
<comment type="catalytic activity">
    <reaction evidence="9">
        <text>Endohydrolysis of (1-&gt;4)-beta-D-xylosidic linkages in xylans.</text>
        <dbReference type="EC" id="3.2.1.8"/>
    </reaction>
</comment>
<comment type="catalytic activity">
    <reaction evidence="9">
        <text>Deacetylation of xylans and xylo-oligosaccharides.</text>
        <dbReference type="EC" id="3.1.1.72"/>
    </reaction>
</comment>
<comment type="pathway">
    <text>Glycan degradation; xylan degradation.</text>
</comment>
<comment type="subcellular location">
    <subcellularLocation>
        <location evidence="8">Secreted</location>
    </subcellularLocation>
</comment>
<comment type="induction">
    <text evidence="8">Induced when the bacterium is cultured on xylan or beta-glucan but not on medium containing mannan. Is repressed by glucose. Transcription of xyn11A occurs in early exponential phase, and thus earlier than transcription of xyn11B.</text>
</comment>
<comment type="domain">
    <text evidence="9">The N-terminal domain possesses xylanase activity, the central region likely has xylan deacetylase activity, and the small C-terminal domain is involved in carbohydrate-binding.</text>
</comment>
<comment type="similarity">
    <text evidence="10">In the N-terminal section; belongs to the glycosyl hydrolase 11 (cellulase G) family.</text>
</comment>
<organism>
    <name type="scientific">Cellvibrio japonicus</name>
    <name type="common">Pseudomonas fluorescens subsp. cellulosa</name>
    <dbReference type="NCBI Taxonomy" id="155077"/>
    <lineage>
        <taxon>Bacteria</taxon>
        <taxon>Pseudomonadati</taxon>
        <taxon>Pseudomonadota</taxon>
        <taxon>Gammaproteobacteria</taxon>
        <taxon>Cellvibrionales</taxon>
        <taxon>Cellvibrionaceae</taxon>
        <taxon>Cellvibrio</taxon>
    </lineage>
</organism>
<name>XY11A_CELJA</name>
<reference key="1">
    <citation type="journal article" date="1995" name="Biochem. J.">
        <title>Novel cellulose-binding domains, NodB homologues and conserved modular architecture in xylanases from the aerobic soil bacteria Pseudomonas fluorescens subsp. cellulosa and Cellvibrio mixtus.</title>
        <authorList>
            <person name="Millward-Sadler S.J."/>
            <person name="Davidson K."/>
            <person name="Hazlewood G.P."/>
            <person name="Black G.W."/>
            <person name="Gilbert H.J."/>
            <person name="Clarke J.H."/>
        </authorList>
    </citation>
    <scope>NUCLEOTIDE SEQUENCE [GENOMIC DNA]</scope>
    <scope>FUNCTION AS A XYLANASE</scope>
    <scope>CATALYTIC ACTIVITY</scope>
    <scope>SUBSTRATE SPECIFICITY</scope>
    <scope>DOMAIN</scope>
    <source>
        <strain>NCIMB 10462</strain>
    </source>
</reference>
<reference key="2">
    <citation type="journal article" date="2002" name="J. Bacteriol.">
        <title>Evidence for temporal regulation of the two Pseudomonas cellulosa xylanases belonging to glycoside hydrolase family 11.</title>
        <authorList>
            <person name="Emami K."/>
            <person name="Nagy T."/>
            <person name="Fontes C.M."/>
            <person name="Ferreira L.M."/>
            <person name="Gilbert H.J."/>
        </authorList>
    </citation>
    <scope>FUNCTION</scope>
    <scope>SUBCELLULAR LOCATION</scope>
    <scope>INDUCTION</scope>
</reference>
<protein>
    <recommendedName>
        <fullName>Bifunctional xylanase/xylan deacetylase</fullName>
    </recommendedName>
    <alternativeName>
        <fullName>XYLE</fullName>
    </alternativeName>
    <domain>
        <recommendedName>
            <fullName>Endo-1,4-beta-xylanase Xyn11A</fullName>
            <shortName>Xylanase 11A</shortName>
            <ecNumber>3.2.1.8</ecNumber>
        </recommendedName>
    </domain>
    <domain>
        <recommendedName>
            <fullName>Acetylxylan deacetylase</fullName>
            <ecNumber>3.1.1.72</ecNumber>
        </recommendedName>
    </domain>
</protein>
<dbReference type="EC" id="3.2.1.8"/>
<dbReference type="EC" id="3.1.1.72"/>
<dbReference type="EMBL" id="Z48927">
    <property type="protein sequence ID" value="CAA88763.1"/>
    <property type="molecule type" value="Genomic_DNA"/>
</dbReference>
<dbReference type="PIR" id="S59633">
    <property type="entry name" value="S59633"/>
</dbReference>
<dbReference type="RefSeq" id="WP_012489333.1">
    <property type="nucleotide sequence ID" value="NZ_CP043304.1"/>
</dbReference>
<dbReference type="SMR" id="Q59674"/>
<dbReference type="CAZy" id="CBM10">
    <property type="family name" value="Carbohydrate-Binding Module Family 10"/>
</dbReference>
<dbReference type="CAZy" id="CBM60">
    <property type="family name" value="Carbohydrate-Binding Module Family 60"/>
</dbReference>
<dbReference type="CAZy" id="GH11">
    <property type="family name" value="Glycoside Hydrolase Family 11"/>
</dbReference>
<dbReference type="OMA" id="YSETMHC"/>
<dbReference type="SABIO-RK" id="Q59674"/>
<dbReference type="UniPathway" id="UPA00114"/>
<dbReference type="GO" id="GO:0005576">
    <property type="term" value="C:extracellular region"/>
    <property type="evidence" value="ECO:0007669"/>
    <property type="project" value="UniProtKB-SubCell"/>
</dbReference>
<dbReference type="GO" id="GO:0046555">
    <property type="term" value="F:acetylxylan esterase activity"/>
    <property type="evidence" value="ECO:0007669"/>
    <property type="project" value="UniProtKB-EC"/>
</dbReference>
<dbReference type="GO" id="GO:0030248">
    <property type="term" value="F:cellulose binding"/>
    <property type="evidence" value="ECO:0007669"/>
    <property type="project" value="InterPro"/>
</dbReference>
<dbReference type="GO" id="GO:0031176">
    <property type="term" value="F:endo-1,4-beta-xylanase activity"/>
    <property type="evidence" value="ECO:0007669"/>
    <property type="project" value="UniProtKB-EC"/>
</dbReference>
<dbReference type="GO" id="GO:0016810">
    <property type="term" value="F:hydrolase activity, acting on carbon-nitrogen (but not peptide) bonds"/>
    <property type="evidence" value="ECO:0007669"/>
    <property type="project" value="InterPro"/>
</dbReference>
<dbReference type="GO" id="GO:0045493">
    <property type="term" value="P:xylan catabolic process"/>
    <property type="evidence" value="ECO:0007669"/>
    <property type="project" value="UniProtKB-UniPathway"/>
</dbReference>
<dbReference type="CDD" id="cd10953">
    <property type="entry name" value="CE4_SlAXE_like"/>
    <property type="match status" value="1"/>
</dbReference>
<dbReference type="Gene3D" id="2.60.120.180">
    <property type="match status" value="1"/>
</dbReference>
<dbReference type="Gene3D" id="2.60.60.40">
    <property type="match status" value="1"/>
</dbReference>
<dbReference type="Gene3D" id="2.30.32.30">
    <property type="entry name" value="CBM10"/>
    <property type="match status" value="1"/>
</dbReference>
<dbReference type="Gene3D" id="3.20.20.370">
    <property type="entry name" value="Glycoside hydrolase/deacetylase"/>
    <property type="match status" value="1"/>
</dbReference>
<dbReference type="InterPro" id="IPR009031">
    <property type="entry name" value="CBM10"/>
</dbReference>
<dbReference type="InterPro" id="IPR002883">
    <property type="entry name" value="CBM10/Dockerin_dom"/>
</dbReference>
<dbReference type="InterPro" id="IPR036601">
    <property type="entry name" value="CBM10_sf"/>
</dbReference>
<dbReference type="InterPro" id="IPR031768">
    <property type="entry name" value="CBM60_xylan-bd"/>
</dbReference>
<dbReference type="InterPro" id="IPR013320">
    <property type="entry name" value="ConA-like_dom_sf"/>
</dbReference>
<dbReference type="InterPro" id="IPR013319">
    <property type="entry name" value="GH11/12"/>
</dbReference>
<dbReference type="InterPro" id="IPR018208">
    <property type="entry name" value="GH11_AS_1"/>
</dbReference>
<dbReference type="InterPro" id="IPR033123">
    <property type="entry name" value="GH11_dom"/>
</dbReference>
<dbReference type="InterPro" id="IPR011330">
    <property type="entry name" value="Glyco_hydro/deAcase_b/a-brl"/>
</dbReference>
<dbReference type="InterPro" id="IPR001137">
    <property type="entry name" value="Glyco_hydro_11"/>
</dbReference>
<dbReference type="InterPro" id="IPR002509">
    <property type="entry name" value="NODB_dom"/>
</dbReference>
<dbReference type="PANTHER" id="PTHR46828">
    <property type="entry name" value="ENDO-1,4-BETA-XYLANASE A-RELATED"/>
    <property type="match status" value="1"/>
</dbReference>
<dbReference type="PANTHER" id="PTHR46828:SF2">
    <property type="entry name" value="ENDO-1,4-BETA-XYLANASE A-RELATED"/>
    <property type="match status" value="1"/>
</dbReference>
<dbReference type="Pfam" id="PF16841">
    <property type="entry name" value="CBM60"/>
    <property type="match status" value="1"/>
</dbReference>
<dbReference type="Pfam" id="PF02013">
    <property type="entry name" value="CBM_10"/>
    <property type="match status" value="1"/>
</dbReference>
<dbReference type="Pfam" id="PF00457">
    <property type="entry name" value="Glyco_hydro_11"/>
    <property type="match status" value="1"/>
</dbReference>
<dbReference type="Pfam" id="PF01522">
    <property type="entry name" value="Polysacc_deac_1"/>
    <property type="match status" value="1"/>
</dbReference>
<dbReference type="PRINTS" id="PR00911">
    <property type="entry name" value="GLHYDRLASE11"/>
</dbReference>
<dbReference type="SMART" id="SM01064">
    <property type="entry name" value="CBM_10"/>
    <property type="match status" value="1"/>
</dbReference>
<dbReference type="SUPFAM" id="SSF49899">
    <property type="entry name" value="Concanavalin A-like lectins/glucanases"/>
    <property type="match status" value="1"/>
</dbReference>
<dbReference type="SUPFAM" id="SSF88713">
    <property type="entry name" value="Glycoside hydrolase/deacetylase"/>
    <property type="match status" value="1"/>
</dbReference>
<dbReference type="SUPFAM" id="SSF57615">
    <property type="entry name" value="Type X cellulose binding domain, CBDX"/>
    <property type="match status" value="1"/>
</dbReference>
<dbReference type="PROSITE" id="PS51763">
    <property type="entry name" value="CBM10"/>
    <property type="match status" value="1"/>
</dbReference>
<dbReference type="PROSITE" id="PS00776">
    <property type="entry name" value="GH11_1"/>
    <property type="match status" value="1"/>
</dbReference>
<dbReference type="PROSITE" id="PS51761">
    <property type="entry name" value="GH11_3"/>
    <property type="match status" value="1"/>
</dbReference>
<dbReference type="PROSITE" id="PS51677">
    <property type="entry name" value="NODB"/>
    <property type="match status" value="1"/>
</dbReference>
<accession>Q59674</accession>
<proteinExistence type="evidence at protein level"/>